<keyword id="KW-0028">Amino-acid biosynthesis</keyword>
<keyword id="KW-0057">Aromatic amino acid biosynthesis</keyword>
<keyword id="KW-0328">Glycosyltransferase</keyword>
<keyword id="KW-0460">Magnesium</keyword>
<keyword id="KW-0479">Metal-binding</keyword>
<keyword id="KW-0808">Transferase</keyword>
<keyword id="KW-0822">Tryptophan biosynthesis</keyword>
<organism>
    <name type="scientific">Pyrobaculum arsenaticum (strain DSM 13514 / JCM 11321 / PZ6)</name>
    <dbReference type="NCBI Taxonomy" id="340102"/>
    <lineage>
        <taxon>Archaea</taxon>
        <taxon>Thermoproteota</taxon>
        <taxon>Thermoprotei</taxon>
        <taxon>Thermoproteales</taxon>
        <taxon>Thermoproteaceae</taxon>
        <taxon>Pyrobaculum</taxon>
    </lineage>
</organism>
<dbReference type="EC" id="2.4.2.18" evidence="1"/>
<dbReference type="EMBL" id="CP000660">
    <property type="protein sequence ID" value="ABP50977.1"/>
    <property type="molecule type" value="Genomic_DNA"/>
</dbReference>
<dbReference type="RefSeq" id="WP_011900884.1">
    <property type="nucleotide sequence ID" value="NC_009376.1"/>
</dbReference>
<dbReference type="SMR" id="A4WKR0"/>
<dbReference type="STRING" id="340102.Pars_1419"/>
<dbReference type="GeneID" id="5054451"/>
<dbReference type="KEGG" id="pas:Pars_1419"/>
<dbReference type="HOGENOM" id="CLU_034315_2_1_2"/>
<dbReference type="OrthoDB" id="8214at2157"/>
<dbReference type="PhylomeDB" id="A4WKR0"/>
<dbReference type="UniPathway" id="UPA00035">
    <property type="reaction ID" value="UER00041"/>
</dbReference>
<dbReference type="Proteomes" id="UP000001567">
    <property type="component" value="Chromosome"/>
</dbReference>
<dbReference type="GO" id="GO:0005829">
    <property type="term" value="C:cytosol"/>
    <property type="evidence" value="ECO:0007669"/>
    <property type="project" value="TreeGrafter"/>
</dbReference>
<dbReference type="GO" id="GO:0004048">
    <property type="term" value="F:anthranilate phosphoribosyltransferase activity"/>
    <property type="evidence" value="ECO:0007669"/>
    <property type="project" value="UniProtKB-UniRule"/>
</dbReference>
<dbReference type="GO" id="GO:0000287">
    <property type="term" value="F:magnesium ion binding"/>
    <property type="evidence" value="ECO:0007669"/>
    <property type="project" value="UniProtKB-UniRule"/>
</dbReference>
<dbReference type="GO" id="GO:0000162">
    <property type="term" value="P:L-tryptophan biosynthetic process"/>
    <property type="evidence" value="ECO:0007669"/>
    <property type="project" value="UniProtKB-UniRule"/>
</dbReference>
<dbReference type="FunFam" id="3.40.1030.10:FF:000002">
    <property type="entry name" value="Anthranilate phosphoribosyltransferase"/>
    <property type="match status" value="1"/>
</dbReference>
<dbReference type="Gene3D" id="3.40.1030.10">
    <property type="entry name" value="Nucleoside phosphorylase/phosphoribosyltransferase catalytic domain"/>
    <property type="match status" value="1"/>
</dbReference>
<dbReference type="Gene3D" id="1.20.970.10">
    <property type="entry name" value="Transferase, Pyrimidine Nucleoside Phosphorylase, Chain C"/>
    <property type="match status" value="1"/>
</dbReference>
<dbReference type="HAMAP" id="MF_00211">
    <property type="entry name" value="TrpD"/>
    <property type="match status" value="1"/>
</dbReference>
<dbReference type="InterPro" id="IPR005940">
    <property type="entry name" value="Anthranilate_Pribosyl_Tfrase"/>
</dbReference>
<dbReference type="InterPro" id="IPR000312">
    <property type="entry name" value="Glycosyl_Trfase_fam3"/>
</dbReference>
<dbReference type="InterPro" id="IPR017459">
    <property type="entry name" value="Glycosyl_Trfase_fam3_N_dom"/>
</dbReference>
<dbReference type="InterPro" id="IPR036320">
    <property type="entry name" value="Glycosyl_Trfase_fam3_N_dom_sf"/>
</dbReference>
<dbReference type="InterPro" id="IPR035902">
    <property type="entry name" value="Nuc_phospho_transferase"/>
</dbReference>
<dbReference type="NCBIfam" id="TIGR01245">
    <property type="entry name" value="trpD"/>
    <property type="match status" value="1"/>
</dbReference>
<dbReference type="PANTHER" id="PTHR43285">
    <property type="entry name" value="ANTHRANILATE PHOSPHORIBOSYLTRANSFERASE"/>
    <property type="match status" value="1"/>
</dbReference>
<dbReference type="PANTHER" id="PTHR43285:SF2">
    <property type="entry name" value="ANTHRANILATE PHOSPHORIBOSYLTRANSFERASE"/>
    <property type="match status" value="1"/>
</dbReference>
<dbReference type="Pfam" id="PF02885">
    <property type="entry name" value="Glycos_trans_3N"/>
    <property type="match status" value="1"/>
</dbReference>
<dbReference type="Pfam" id="PF00591">
    <property type="entry name" value="Glycos_transf_3"/>
    <property type="match status" value="1"/>
</dbReference>
<dbReference type="SUPFAM" id="SSF52418">
    <property type="entry name" value="Nucleoside phosphorylase/phosphoribosyltransferase catalytic domain"/>
    <property type="match status" value="1"/>
</dbReference>
<dbReference type="SUPFAM" id="SSF47648">
    <property type="entry name" value="Nucleoside phosphorylase/phosphoribosyltransferase N-terminal domain"/>
    <property type="match status" value="1"/>
</dbReference>
<gene>
    <name evidence="1" type="primary">trpD</name>
    <name type="ordered locus">Pars_1419</name>
</gene>
<accession>A4WKR0</accession>
<feature type="chain" id="PRO_1000043053" description="Anthranilate phosphoribosyltransferase">
    <location>
        <begin position="1"/>
        <end position="333"/>
    </location>
</feature>
<feature type="binding site" evidence="1">
    <location>
        <position position="80"/>
    </location>
    <ligand>
        <name>5-phospho-alpha-D-ribose 1-diphosphate</name>
        <dbReference type="ChEBI" id="CHEBI:58017"/>
    </ligand>
</feature>
<feature type="binding site" evidence="1">
    <location>
        <position position="80"/>
    </location>
    <ligand>
        <name>anthranilate</name>
        <dbReference type="ChEBI" id="CHEBI:16567"/>
        <label>1</label>
    </ligand>
</feature>
<feature type="binding site" evidence="1">
    <location>
        <begin position="83"/>
        <end position="84"/>
    </location>
    <ligand>
        <name>5-phospho-alpha-D-ribose 1-diphosphate</name>
        <dbReference type="ChEBI" id="CHEBI:58017"/>
    </ligand>
</feature>
<feature type="binding site" evidence="1">
    <location>
        <position position="88"/>
    </location>
    <ligand>
        <name>5-phospho-alpha-D-ribose 1-diphosphate</name>
        <dbReference type="ChEBI" id="CHEBI:58017"/>
    </ligand>
</feature>
<feature type="binding site" evidence="1">
    <location>
        <begin position="90"/>
        <end position="93"/>
    </location>
    <ligand>
        <name>5-phospho-alpha-D-ribose 1-diphosphate</name>
        <dbReference type="ChEBI" id="CHEBI:58017"/>
    </ligand>
</feature>
<feature type="binding site" evidence="1">
    <location>
        <position position="92"/>
    </location>
    <ligand>
        <name>Mg(2+)</name>
        <dbReference type="ChEBI" id="CHEBI:18420"/>
        <label>1</label>
    </ligand>
</feature>
<feature type="binding site" evidence="1">
    <location>
        <begin position="108"/>
        <end position="116"/>
    </location>
    <ligand>
        <name>5-phospho-alpha-D-ribose 1-diphosphate</name>
        <dbReference type="ChEBI" id="CHEBI:58017"/>
    </ligand>
</feature>
<feature type="binding site" evidence="1">
    <location>
        <position position="111"/>
    </location>
    <ligand>
        <name>anthranilate</name>
        <dbReference type="ChEBI" id="CHEBI:16567"/>
        <label>1</label>
    </ligand>
</feature>
<feature type="binding site" evidence="1">
    <location>
        <position position="120"/>
    </location>
    <ligand>
        <name>5-phospho-alpha-D-ribose 1-diphosphate</name>
        <dbReference type="ChEBI" id="CHEBI:58017"/>
    </ligand>
</feature>
<feature type="binding site" evidence="1">
    <location>
        <position position="166"/>
    </location>
    <ligand>
        <name>anthranilate</name>
        <dbReference type="ChEBI" id="CHEBI:16567"/>
        <label>2</label>
    </ligand>
</feature>
<feature type="binding site" evidence="1">
    <location>
        <position position="224"/>
    </location>
    <ligand>
        <name>Mg(2+)</name>
        <dbReference type="ChEBI" id="CHEBI:18420"/>
        <label>2</label>
    </ligand>
</feature>
<feature type="binding site" evidence="1">
    <location>
        <position position="225"/>
    </location>
    <ligand>
        <name>Mg(2+)</name>
        <dbReference type="ChEBI" id="CHEBI:18420"/>
        <label>1</label>
    </ligand>
</feature>
<feature type="binding site" evidence="1">
    <location>
        <position position="225"/>
    </location>
    <ligand>
        <name>Mg(2+)</name>
        <dbReference type="ChEBI" id="CHEBI:18420"/>
        <label>2</label>
    </ligand>
</feature>
<protein>
    <recommendedName>
        <fullName evidence="1">Anthranilate phosphoribosyltransferase</fullName>
        <ecNumber evidence="1">2.4.2.18</ecNumber>
    </recommendedName>
</protein>
<name>TRPD_PYRAR</name>
<comment type="function">
    <text evidence="1">Catalyzes the transfer of the phosphoribosyl group of 5-phosphorylribose-1-pyrophosphate (PRPP) to anthranilate to yield N-(5'-phosphoribosyl)-anthranilate (PRA).</text>
</comment>
<comment type="catalytic activity">
    <reaction evidence="1">
        <text>N-(5-phospho-beta-D-ribosyl)anthranilate + diphosphate = 5-phospho-alpha-D-ribose 1-diphosphate + anthranilate</text>
        <dbReference type="Rhea" id="RHEA:11768"/>
        <dbReference type="ChEBI" id="CHEBI:16567"/>
        <dbReference type="ChEBI" id="CHEBI:18277"/>
        <dbReference type="ChEBI" id="CHEBI:33019"/>
        <dbReference type="ChEBI" id="CHEBI:58017"/>
        <dbReference type="EC" id="2.4.2.18"/>
    </reaction>
</comment>
<comment type="cofactor">
    <cofactor evidence="1">
        <name>Mg(2+)</name>
        <dbReference type="ChEBI" id="CHEBI:18420"/>
    </cofactor>
    <text evidence="1">Binds 2 magnesium ions per monomer.</text>
</comment>
<comment type="pathway">
    <text evidence="1">Amino-acid biosynthesis; L-tryptophan biosynthesis; L-tryptophan from chorismate: step 2/5.</text>
</comment>
<comment type="subunit">
    <text evidence="1">Homodimer.</text>
</comment>
<comment type="similarity">
    <text evidence="1">Belongs to the anthranilate phosphoribosyltransferase family.</text>
</comment>
<evidence type="ECO:0000255" key="1">
    <source>
        <dbReference type="HAMAP-Rule" id="MF_00211"/>
    </source>
</evidence>
<sequence length="333" mass="34831">MDLKALLRKLGNGLRLTADEAYLLGRGILSGSLCDVEVAASLTAMRVRGESPEEVAGFVKMAREFAVRVPLRIEAVDTAGTGGDGAGTINLSTAAAIVAAAAGAKVLKHGNRSASGLFGSADFMEAVGYNLEVGPEKAAELVEKVGFAFVFAPRYHPAFAKVAPVRRALPFRTIFNIVGPLANPGLVKRQLIGVAEERLLEVVAAAAAELGFEHAVVVHGSGVDEVSSEGATTVYEVKRGSLERYQIAPEDLGAPRVPIPRASDKEEAVAKALAGLRGELREASVAIALNAAFALYVAGVVGDPRDGFELAMRAIQEGVAYRKLVEAVEASRT</sequence>
<proteinExistence type="inferred from homology"/>
<reference key="1">
    <citation type="submission" date="2007-04" db="EMBL/GenBank/DDBJ databases">
        <title>Complete sequence of Pyrobaculum arsenaticum DSM 13514.</title>
        <authorList>
            <consortium name="US DOE Joint Genome Institute"/>
            <person name="Copeland A."/>
            <person name="Lucas S."/>
            <person name="Lapidus A."/>
            <person name="Barry K."/>
            <person name="Glavina del Rio T."/>
            <person name="Dalin E."/>
            <person name="Tice H."/>
            <person name="Pitluck S."/>
            <person name="Chain P."/>
            <person name="Malfatti S."/>
            <person name="Shin M."/>
            <person name="Vergez L."/>
            <person name="Schmutz J."/>
            <person name="Larimer F."/>
            <person name="Land M."/>
            <person name="Hauser L."/>
            <person name="Kyrpides N."/>
            <person name="Mikhailova N."/>
            <person name="Cozen A.E."/>
            <person name="Fitz-Gibbon S.T."/>
            <person name="House C.H."/>
            <person name="Saltikov C."/>
            <person name="Lowe T.M."/>
            <person name="Richardson P."/>
        </authorList>
    </citation>
    <scope>NUCLEOTIDE SEQUENCE [LARGE SCALE GENOMIC DNA]</scope>
    <source>
        <strain>ATCC 700994 / DSM 13514 / JCM 11321 / PZ6</strain>
    </source>
</reference>